<proteinExistence type="inferred from homology"/>
<organism>
    <name type="scientific">Salmonella paratyphi A (strain AKU_12601)</name>
    <dbReference type="NCBI Taxonomy" id="554290"/>
    <lineage>
        <taxon>Bacteria</taxon>
        <taxon>Pseudomonadati</taxon>
        <taxon>Pseudomonadota</taxon>
        <taxon>Gammaproteobacteria</taxon>
        <taxon>Enterobacterales</taxon>
        <taxon>Enterobacteriaceae</taxon>
        <taxon>Salmonella</taxon>
    </lineage>
</organism>
<comment type="function">
    <text evidence="1">Catalyzes the NAD(+)-dependent oxidation of L-threonine to 2-amino-3-ketobutyrate.</text>
</comment>
<comment type="catalytic activity">
    <reaction evidence="1">
        <text>L-threonine + NAD(+) = (2S)-2-amino-3-oxobutanoate + NADH + H(+)</text>
        <dbReference type="Rhea" id="RHEA:13161"/>
        <dbReference type="ChEBI" id="CHEBI:15378"/>
        <dbReference type="ChEBI" id="CHEBI:57540"/>
        <dbReference type="ChEBI" id="CHEBI:57926"/>
        <dbReference type="ChEBI" id="CHEBI:57945"/>
        <dbReference type="ChEBI" id="CHEBI:78948"/>
        <dbReference type="EC" id="1.1.1.103"/>
    </reaction>
</comment>
<comment type="cofactor">
    <cofactor evidence="1">
        <name>Zn(2+)</name>
        <dbReference type="ChEBI" id="CHEBI:29105"/>
    </cofactor>
    <text evidence="1">Binds 2 Zn(2+) ions per subunit.</text>
</comment>
<comment type="pathway">
    <text evidence="1">Amino-acid degradation; L-threonine degradation via oxydo-reductase pathway; glycine from L-threonine: step 1/2.</text>
</comment>
<comment type="subunit">
    <text evidence="1">Homotetramer.</text>
</comment>
<comment type="subcellular location">
    <subcellularLocation>
        <location evidence="1">Cytoplasm</location>
    </subcellularLocation>
</comment>
<comment type="similarity">
    <text evidence="1">Belongs to the zinc-containing alcohol dehydrogenase family.</text>
</comment>
<keyword id="KW-0963">Cytoplasm</keyword>
<keyword id="KW-0479">Metal-binding</keyword>
<keyword id="KW-0520">NAD</keyword>
<keyword id="KW-0560">Oxidoreductase</keyword>
<keyword id="KW-0862">Zinc</keyword>
<protein>
    <recommendedName>
        <fullName evidence="1">L-threonine 3-dehydrogenase</fullName>
        <shortName evidence="1">TDH</shortName>
        <ecNumber evidence="1">1.1.1.103</ecNumber>
    </recommendedName>
</protein>
<feature type="chain" id="PRO_1000130564" description="L-threonine 3-dehydrogenase">
    <location>
        <begin position="1"/>
        <end position="341"/>
    </location>
</feature>
<feature type="active site" description="Charge relay system" evidence="1">
    <location>
        <position position="40"/>
    </location>
</feature>
<feature type="active site" description="Charge relay system" evidence="1">
    <location>
        <position position="43"/>
    </location>
</feature>
<feature type="binding site" evidence="1">
    <location>
        <position position="38"/>
    </location>
    <ligand>
        <name>Zn(2+)</name>
        <dbReference type="ChEBI" id="CHEBI:29105"/>
        <label>1</label>
        <note>catalytic</note>
    </ligand>
</feature>
<feature type="binding site" evidence="1">
    <location>
        <position position="63"/>
    </location>
    <ligand>
        <name>Zn(2+)</name>
        <dbReference type="ChEBI" id="CHEBI:29105"/>
        <label>1</label>
        <note>catalytic</note>
    </ligand>
</feature>
<feature type="binding site" evidence="1">
    <location>
        <position position="64"/>
    </location>
    <ligand>
        <name>Zn(2+)</name>
        <dbReference type="ChEBI" id="CHEBI:29105"/>
        <label>1</label>
        <note>catalytic</note>
    </ligand>
</feature>
<feature type="binding site" evidence="1">
    <location>
        <position position="93"/>
    </location>
    <ligand>
        <name>Zn(2+)</name>
        <dbReference type="ChEBI" id="CHEBI:29105"/>
        <label>2</label>
    </ligand>
</feature>
<feature type="binding site" evidence="1">
    <location>
        <position position="96"/>
    </location>
    <ligand>
        <name>Zn(2+)</name>
        <dbReference type="ChEBI" id="CHEBI:29105"/>
        <label>2</label>
    </ligand>
</feature>
<feature type="binding site" evidence="1">
    <location>
        <position position="99"/>
    </location>
    <ligand>
        <name>Zn(2+)</name>
        <dbReference type="ChEBI" id="CHEBI:29105"/>
        <label>2</label>
    </ligand>
</feature>
<feature type="binding site" evidence="1">
    <location>
        <position position="107"/>
    </location>
    <ligand>
        <name>Zn(2+)</name>
        <dbReference type="ChEBI" id="CHEBI:29105"/>
        <label>2</label>
    </ligand>
</feature>
<feature type="binding site" evidence="1">
    <location>
        <position position="175"/>
    </location>
    <ligand>
        <name>NAD(+)</name>
        <dbReference type="ChEBI" id="CHEBI:57540"/>
    </ligand>
</feature>
<feature type="binding site" evidence="1">
    <location>
        <position position="195"/>
    </location>
    <ligand>
        <name>NAD(+)</name>
        <dbReference type="ChEBI" id="CHEBI:57540"/>
    </ligand>
</feature>
<feature type="binding site" evidence="1">
    <location>
        <position position="200"/>
    </location>
    <ligand>
        <name>NAD(+)</name>
        <dbReference type="ChEBI" id="CHEBI:57540"/>
    </ligand>
</feature>
<feature type="binding site" evidence="1">
    <location>
        <begin position="262"/>
        <end position="264"/>
    </location>
    <ligand>
        <name>NAD(+)</name>
        <dbReference type="ChEBI" id="CHEBI:57540"/>
    </ligand>
</feature>
<feature type="binding site" evidence="1">
    <location>
        <begin position="286"/>
        <end position="287"/>
    </location>
    <ligand>
        <name>NAD(+)</name>
        <dbReference type="ChEBI" id="CHEBI:57540"/>
    </ligand>
</feature>
<feature type="site" description="Important for catalytic activity for the proton relay mechanism but does not participate directly in the coordination of zinc atom" evidence="1">
    <location>
        <position position="148"/>
    </location>
</feature>
<accession>B5BHZ1</accession>
<dbReference type="EC" id="1.1.1.103" evidence="1"/>
<dbReference type="EMBL" id="FM200053">
    <property type="protein sequence ID" value="CAR61589.1"/>
    <property type="molecule type" value="Genomic_DNA"/>
</dbReference>
<dbReference type="RefSeq" id="WP_000645990.1">
    <property type="nucleotide sequence ID" value="NC_011147.1"/>
</dbReference>
<dbReference type="SMR" id="B5BHZ1"/>
<dbReference type="KEGG" id="sek:SSPA3323"/>
<dbReference type="HOGENOM" id="CLU_026673_11_0_6"/>
<dbReference type="UniPathway" id="UPA00046">
    <property type="reaction ID" value="UER00505"/>
</dbReference>
<dbReference type="Proteomes" id="UP000001869">
    <property type="component" value="Chromosome"/>
</dbReference>
<dbReference type="GO" id="GO:0005737">
    <property type="term" value="C:cytoplasm"/>
    <property type="evidence" value="ECO:0007669"/>
    <property type="project" value="UniProtKB-SubCell"/>
</dbReference>
<dbReference type="GO" id="GO:0008743">
    <property type="term" value="F:L-threonine 3-dehydrogenase activity"/>
    <property type="evidence" value="ECO:0007669"/>
    <property type="project" value="UniProtKB-UniRule"/>
</dbReference>
<dbReference type="GO" id="GO:0008270">
    <property type="term" value="F:zinc ion binding"/>
    <property type="evidence" value="ECO:0007669"/>
    <property type="project" value="UniProtKB-UniRule"/>
</dbReference>
<dbReference type="GO" id="GO:0019518">
    <property type="term" value="P:L-threonine catabolic process to glycine"/>
    <property type="evidence" value="ECO:0007669"/>
    <property type="project" value="UniProtKB-UniPathway"/>
</dbReference>
<dbReference type="FunFam" id="3.40.50.720:FF:000059">
    <property type="entry name" value="L-threonine 3-dehydrogenase"/>
    <property type="match status" value="1"/>
</dbReference>
<dbReference type="Gene3D" id="3.90.180.10">
    <property type="entry name" value="Medium-chain alcohol dehydrogenases, catalytic domain"/>
    <property type="match status" value="1"/>
</dbReference>
<dbReference type="Gene3D" id="3.40.50.720">
    <property type="entry name" value="NAD(P)-binding Rossmann-like Domain"/>
    <property type="match status" value="1"/>
</dbReference>
<dbReference type="HAMAP" id="MF_00627">
    <property type="entry name" value="Thr_dehydrog"/>
    <property type="match status" value="1"/>
</dbReference>
<dbReference type="InterPro" id="IPR013149">
    <property type="entry name" value="ADH-like_C"/>
</dbReference>
<dbReference type="InterPro" id="IPR013154">
    <property type="entry name" value="ADH-like_N"/>
</dbReference>
<dbReference type="InterPro" id="IPR002328">
    <property type="entry name" value="ADH_Zn_CS"/>
</dbReference>
<dbReference type="InterPro" id="IPR011032">
    <property type="entry name" value="GroES-like_sf"/>
</dbReference>
<dbReference type="InterPro" id="IPR004627">
    <property type="entry name" value="L-Threonine_3-DHase"/>
</dbReference>
<dbReference type="InterPro" id="IPR036291">
    <property type="entry name" value="NAD(P)-bd_dom_sf"/>
</dbReference>
<dbReference type="InterPro" id="IPR020843">
    <property type="entry name" value="PKS_ER"/>
</dbReference>
<dbReference type="InterPro" id="IPR050129">
    <property type="entry name" value="Zn_alcohol_dh"/>
</dbReference>
<dbReference type="NCBIfam" id="NF003808">
    <property type="entry name" value="PRK05396.1"/>
    <property type="match status" value="1"/>
</dbReference>
<dbReference type="NCBIfam" id="TIGR00692">
    <property type="entry name" value="tdh"/>
    <property type="match status" value="1"/>
</dbReference>
<dbReference type="PANTHER" id="PTHR43401">
    <property type="entry name" value="L-THREONINE 3-DEHYDROGENASE"/>
    <property type="match status" value="1"/>
</dbReference>
<dbReference type="PANTHER" id="PTHR43401:SF2">
    <property type="entry name" value="L-THREONINE 3-DEHYDROGENASE"/>
    <property type="match status" value="1"/>
</dbReference>
<dbReference type="Pfam" id="PF08240">
    <property type="entry name" value="ADH_N"/>
    <property type="match status" value="1"/>
</dbReference>
<dbReference type="Pfam" id="PF00107">
    <property type="entry name" value="ADH_zinc_N"/>
    <property type="match status" value="1"/>
</dbReference>
<dbReference type="SMART" id="SM00829">
    <property type="entry name" value="PKS_ER"/>
    <property type="match status" value="1"/>
</dbReference>
<dbReference type="SUPFAM" id="SSF50129">
    <property type="entry name" value="GroES-like"/>
    <property type="match status" value="1"/>
</dbReference>
<dbReference type="SUPFAM" id="SSF51735">
    <property type="entry name" value="NAD(P)-binding Rossmann-fold domains"/>
    <property type="match status" value="1"/>
</dbReference>
<dbReference type="PROSITE" id="PS00059">
    <property type="entry name" value="ADH_ZINC"/>
    <property type="match status" value="1"/>
</dbReference>
<gene>
    <name evidence="1" type="primary">tdh</name>
    <name type="ordered locus">SSPA3323</name>
</gene>
<sequence>MKALSKLKAEEGIWMTDVPEPEVGHNDLLIKIRKTAICGTDVHIYNWDDWSQKTIPVPMVVGHEYVGEVVGIGQEVKGFKIGDRVSGEGHITCGHCRNCRGGRTHLCRNTTGVGVNRPGCFAEYLVIPAFNAFKIPDNISDDLASIFDPFGNAVHTALSFDLVGEDVLVSGAGPIGVMAAAVAKHVGARHVVITDVNEYRLELARKMGVTRAVNVAKESLNDVMAELGMTEGFDVGLEMSGAPPAFRTMLDTMNHGGRIAMLGIPPSDMSIDWTKVIFKGLFIKGIYGREMFETWYKMAALIQSGLDLSPIITHRFSIDDFQKGFDAMRSGQSGKVILSWD</sequence>
<name>TDH_SALPK</name>
<evidence type="ECO:0000255" key="1">
    <source>
        <dbReference type="HAMAP-Rule" id="MF_00627"/>
    </source>
</evidence>
<reference key="1">
    <citation type="journal article" date="2009" name="BMC Genomics">
        <title>Pseudogene accumulation in the evolutionary histories of Salmonella enterica serovars Paratyphi A and Typhi.</title>
        <authorList>
            <person name="Holt K.E."/>
            <person name="Thomson N.R."/>
            <person name="Wain J."/>
            <person name="Langridge G.C."/>
            <person name="Hasan R."/>
            <person name="Bhutta Z.A."/>
            <person name="Quail M.A."/>
            <person name="Norbertczak H."/>
            <person name="Walker D."/>
            <person name="Simmonds M."/>
            <person name="White B."/>
            <person name="Bason N."/>
            <person name="Mungall K."/>
            <person name="Dougan G."/>
            <person name="Parkhill J."/>
        </authorList>
    </citation>
    <scope>NUCLEOTIDE SEQUENCE [LARGE SCALE GENOMIC DNA]</scope>
    <source>
        <strain>AKU_12601</strain>
    </source>
</reference>